<sequence length="83" mass="9408">MAMKSVSNFAIFLILFLVTSEISEIEAKDKECLKGYIDAPLSYCMARIYPSLCYRNCRFYKGAKGGKCDGLKCFCDFCSDKPF</sequence>
<dbReference type="EMBL" id="AJ632250">
    <property type="protein sequence ID" value="CAG15157.1"/>
    <property type="molecule type" value="Genomic_DNA"/>
</dbReference>
<dbReference type="EMBL" id="AJ632251">
    <property type="protein sequence ID" value="CAG15162.1"/>
    <property type="status" value="ALT_INIT"/>
    <property type="molecule type" value="Genomic_DNA"/>
</dbReference>
<dbReference type="EMBL" id="AJ632252">
    <property type="protein sequence ID" value="CAG15167.1"/>
    <property type="molecule type" value="Genomic_DNA"/>
</dbReference>
<dbReference type="EMBL" id="AJ632253">
    <property type="protein sequence ID" value="CAG15172.1"/>
    <property type="molecule type" value="Genomic_DNA"/>
</dbReference>
<dbReference type="EMBL" id="AJ632254">
    <property type="protein sequence ID" value="CAG15177.1"/>
    <property type="molecule type" value="Genomic_DNA"/>
</dbReference>
<dbReference type="EMBL" id="AJ632255">
    <property type="protein sequence ID" value="CAG15183.1"/>
    <property type="molecule type" value="Genomic_DNA"/>
</dbReference>
<dbReference type="EMBL" id="AJ632256">
    <property type="protein sequence ID" value="CAG15189.1"/>
    <property type="molecule type" value="Genomic_DNA"/>
</dbReference>
<dbReference type="EMBL" id="AJ632257">
    <property type="protein sequence ID" value="CAG15195.1"/>
    <property type="molecule type" value="Genomic_DNA"/>
</dbReference>
<dbReference type="EMBL" id="AJ632258">
    <property type="protein sequence ID" value="CAG15200.1"/>
    <property type="molecule type" value="Genomic_DNA"/>
</dbReference>
<dbReference type="EMBL" id="AJ632259">
    <property type="protein sequence ID" value="CAG15205.1"/>
    <property type="molecule type" value="Genomic_DNA"/>
</dbReference>
<dbReference type="EMBL" id="AJ632260">
    <property type="protein sequence ID" value="CAG15210.1"/>
    <property type="molecule type" value="Genomic_DNA"/>
</dbReference>
<dbReference type="EMBL" id="AJ632261">
    <property type="protein sequence ID" value="CAG15215.1"/>
    <property type="molecule type" value="Genomic_DNA"/>
</dbReference>
<dbReference type="EMBL" id="AJ632262">
    <property type="protein sequence ID" value="CAG15220.1"/>
    <property type="molecule type" value="Genomic_DNA"/>
</dbReference>
<dbReference type="EMBL" id="AJ632263">
    <property type="protein sequence ID" value="CAG15225.1"/>
    <property type="molecule type" value="Genomic_DNA"/>
</dbReference>
<dbReference type="EMBL" id="AJ632264">
    <property type="protein sequence ID" value="CAG15230.1"/>
    <property type="molecule type" value="Genomic_DNA"/>
</dbReference>
<dbReference type="EMBL" id="AJ632265">
    <property type="protein sequence ID" value="CAG15235.1"/>
    <property type="molecule type" value="Genomic_DNA"/>
</dbReference>
<dbReference type="EMBL" id="AJ632266">
    <property type="protein sequence ID" value="CAG15240.1"/>
    <property type="molecule type" value="Genomic_DNA"/>
</dbReference>
<dbReference type="EMBL" id="AC002335">
    <property type="protein sequence ID" value="AAB64336.1"/>
    <property type="status" value="ALT_INIT"/>
    <property type="molecule type" value="Genomic_DNA"/>
</dbReference>
<dbReference type="EMBL" id="CP002685">
    <property type="protein sequence ID" value="AEC10286.2"/>
    <property type="molecule type" value="Genomic_DNA"/>
</dbReference>
<dbReference type="EMBL" id="BX819403">
    <property type="status" value="NOT_ANNOTATED_CDS"/>
    <property type="molecule type" value="mRNA"/>
</dbReference>
<dbReference type="EMBL" id="AK317158">
    <property type="protein sequence ID" value="BAH19844.1"/>
    <property type="status" value="ALT_INIT"/>
    <property type="molecule type" value="mRNA"/>
</dbReference>
<dbReference type="PIR" id="C84867">
    <property type="entry name" value="C84867"/>
</dbReference>
<dbReference type="RefSeq" id="NP_181881.2">
    <property type="nucleotide sequence ID" value="NM_129914.4"/>
</dbReference>
<dbReference type="SMR" id="O22867"/>
<dbReference type="FunCoup" id="O22867">
    <property type="interactions" value="4"/>
</dbReference>
<dbReference type="STRING" id="3702.O22867"/>
<dbReference type="PaxDb" id="3702-AT2G43530.1"/>
<dbReference type="ProteomicsDB" id="224185"/>
<dbReference type="EnsemblPlants" id="AT2G43530.1">
    <property type="protein sequence ID" value="AT2G43530.1"/>
    <property type="gene ID" value="AT2G43530"/>
</dbReference>
<dbReference type="GeneID" id="818954"/>
<dbReference type="Gramene" id="AT2G43530.1">
    <property type="protein sequence ID" value="AT2G43530.1"/>
    <property type="gene ID" value="AT2G43530"/>
</dbReference>
<dbReference type="KEGG" id="ath:AT2G43530"/>
<dbReference type="Araport" id="AT2G43530"/>
<dbReference type="TAIR" id="AT2G43530"/>
<dbReference type="HOGENOM" id="CLU_181760_0_0_1"/>
<dbReference type="InParanoid" id="O22867"/>
<dbReference type="OMA" id="CMARIYP"/>
<dbReference type="PhylomeDB" id="O22867"/>
<dbReference type="PRO" id="PR:O22867"/>
<dbReference type="Proteomes" id="UP000006548">
    <property type="component" value="Chromosome 2"/>
</dbReference>
<dbReference type="ExpressionAtlas" id="O22867">
    <property type="expression patterns" value="baseline and differential"/>
</dbReference>
<dbReference type="GO" id="GO:0005576">
    <property type="term" value="C:extracellular region"/>
    <property type="evidence" value="ECO:0007669"/>
    <property type="project" value="UniProtKB-SubCell"/>
</dbReference>
<dbReference type="GO" id="GO:0019871">
    <property type="term" value="F:sodium channel inhibitor activity"/>
    <property type="evidence" value="ECO:0007669"/>
    <property type="project" value="InterPro"/>
</dbReference>
<dbReference type="GO" id="GO:0050832">
    <property type="term" value="P:defense response to fungus"/>
    <property type="evidence" value="ECO:0007669"/>
    <property type="project" value="UniProtKB-KW"/>
</dbReference>
<dbReference type="GO" id="GO:0031640">
    <property type="term" value="P:killing of cells of another organism"/>
    <property type="evidence" value="ECO:0007669"/>
    <property type="project" value="UniProtKB-KW"/>
</dbReference>
<dbReference type="Gene3D" id="3.30.30.10">
    <property type="entry name" value="Knottin, scorpion toxin-like"/>
    <property type="match status" value="1"/>
</dbReference>
<dbReference type="InterPro" id="IPR003614">
    <property type="entry name" value="Scorpion_toxin-like"/>
</dbReference>
<dbReference type="InterPro" id="IPR036574">
    <property type="entry name" value="Scorpion_toxin-like_sf"/>
</dbReference>
<dbReference type="InterPro" id="IPR002061">
    <property type="entry name" value="Scorpion_toxinL/defensin"/>
</dbReference>
<dbReference type="Pfam" id="PF00537">
    <property type="entry name" value="Toxin_3"/>
    <property type="match status" value="1"/>
</dbReference>
<dbReference type="SMART" id="SM00505">
    <property type="entry name" value="Knot1"/>
    <property type="match status" value="1"/>
</dbReference>
<dbReference type="SUPFAM" id="SSF57095">
    <property type="entry name" value="Scorpion toxin-like"/>
    <property type="match status" value="1"/>
</dbReference>
<organism>
    <name type="scientific">Arabidopsis thaliana</name>
    <name type="common">Mouse-ear cress</name>
    <dbReference type="NCBI Taxonomy" id="3702"/>
    <lineage>
        <taxon>Eukaryota</taxon>
        <taxon>Viridiplantae</taxon>
        <taxon>Streptophyta</taxon>
        <taxon>Embryophyta</taxon>
        <taxon>Tracheophyta</taxon>
        <taxon>Spermatophyta</taxon>
        <taxon>Magnoliopsida</taxon>
        <taxon>eudicotyledons</taxon>
        <taxon>Gunneridae</taxon>
        <taxon>Pentapetalae</taxon>
        <taxon>rosids</taxon>
        <taxon>malvids</taxon>
        <taxon>Brassicales</taxon>
        <taxon>Brassicaceae</taxon>
        <taxon>Camelineae</taxon>
        <taxon>Arabidopsis</taxon>
    </lineage>
</organism>
<feature type="signal peptide" evidence="2">
    <location>
        <begin position="1"/>
        <end position="27"/>
    </location>
</feature>
<feature type="chain" id="PRO_0000031095" description="Defensin-like protein 194">
    <location>
        <begin position="28"/>
        <end position="83"/>
    </location>
</feature>
<feature type="site" description="Reactive bond" evidence="1">
    <location>
        <begin position="47"/>
        <end position="48"/>
    </location>
</feature>
<feature type="disulfide bond" evidence="1">
    <location>
        <begin position="32"/>
        <end position="78"/>
    </location>
</feature>
<feature type="disulfide bond" evidence="1">
    <location>
        <begin position="44"/>
        <end position="68"/>
    </location>
</feature>
<feature type="disulfide bond" evidence="1">
    <location>
        <begin position="53"/>
        <end position="73"/>
    </location>
</feature>
<feature type="disulfide bond" evidence="1">
    <location>
        <begin position="57"/>
        <end position="75"/>
    </location>
</feature>
<feature type="sequence variant" description="In strain: cv. Cvi-1 and cv. Nd-1.">
    <original>I</original>
    <variation>T</variation>
    <location>
        <position position="11"/>
    </location>
</feature>
<feature type="sequence variant" description="In strain: cv. Nok-0.">
    <original>S</original>
    <variation>Y</variation>
    <location>
        <position position="20"/>
    </location>
</feature>
<feature type="sequence variant" description="In strain: cv. Cvi-1, cv. Fe-1a, cv. Nd-1 and cv. Wei-0.">
    <original>K</original>
    <variation>S</variation>
    <location>
        <position position="30"/>
    </location>
</feature>
<feature type="sequence variant" description="In strain: cv. Cvi-1, cv. Di-0, cv. Fe-1a, cv. Goe-0, cv. Ita-0, cv. Kas-1, cv. Landsberg erecta, cv. Le-0, cv. Nd-1, cv. Nok-0, cv. Rsch-0, cv. Sah-0, cv. Ta-0, cv. Wei-0 and cv. Wil-2.">
    <original>F</original>
    <variation>S</variation>
    <location>
        <position position="59"/>
    </location>
</feature>
<feature type="sequence conflict" description="In Ref. 4; BX819403." evidence="3" ref="4">
    <original>D</original>
    <variation>H</variation>
    <location>
        <position position="80"/>
    </location>
</feature>
<name>DF194_ARATH</name>
<accession>O22867</accession>
<accession>B9DGH7</accession>
<accession>F4IR67</accession>
<accession>Q6ZZP9</accession>
<accession>Q6ZZQ4</accession>
<accession>Q6ZZQ9</accession>
<accession>Q6ZZR4</accession>
<accession>Q6ZZR9</accession>
<accession>Q6ZZT8</accession>
<evidence type="ECO:0000250" key="1"/>
<evidence type="ECO:0000255" key="2"/>
<evidence type="ECO:0000305" key="3"/>
<evidence type="ECO:0000305" key="4">
    <source>
    </source>
</evidence>
<proteinExistence type="inferred from homology"/>
<keyword id="KW-0929">Antimicrobial</keyword>
<keyword id="KW-1015">Disulfide bond</keyword>
<keyword id="KW-0295">Fungicide</keyword>
<keyword id="KW-0611">Plant defense</keyword>
<keyword id="KW-1185">Reference proteome</keyword>
<keyword id="KW-0964">Secreted</keyword>
<keyword id="KW-0732">Signal</keyword>
<protein>
    <recommendedName>
        <fullName>Defensin-like protein 194</fullName>
    </recommendedName>
    <alternativeName>
        <fullName>Trypsin inhibitor ATTI-3</fullName>
    </alternativeName>
</protein>
<gene>
    <name type="primary">ATTI3</name>
    <name type="ordered locus">At2g43530</name>
    <name type="ORF">T01O24.27</name>
</gene>
<reference key="1">
    <citation type="journal article" date="2004" name="Genetics">
        <title>Functional divergence in tandemly duplicated Arabidopsis thaliana trypsin inhibitor genes.</title>
        <authorList>
            <person name="Clauss M.J."/>
            <person name="Mitchell-Olds T."/>
        </authorList>
    </citation>
    <scope>NUCLEOTIDE SEQUENCE [GENOMIC DNA]</scope>
    <scope>GENE FAMILY</scope>
    <scope>NOMENCLATURE</scope>
    <source>
        <strain>cv. Col-1</strain>
        <strain>cv. Cvi-1</strain>
        <strain>cv. Di-0</strain>
        <strain>cv. Fe-1a</strain>
        <strain>cv. Goe-0</strain>
        <strain>cv. Ita-0</strain>
        <strain>cv. Kas-1</strain>
        <strain>cv. Landsberg erecta</strain>
        <strain>cv. Le-0</strain>
        <strain>cv. Nd-1</strain>
        <strain>cv. Nok-0</strain>
        <strain>cv. Rsch-0</strain>
        <strain>cv. Sah-0</strain>
        <strain>cv. Ta-0</strain>
        <strain>cv. Wassilewskija</strain>
        <strain>cv. Wei-0</strain>
        <strain>cv. Wil-2</strain>
        <tissue>Leaf</tissue>
    </source>
</reference>
<reference key="2">
    <citation type="journal article" date="1999" name="Nature">
        <title>Sequence and analysis of chromosome 2 of the plant Arabidopsis thaliana.</title>
        <authorList>
            <person name="Lin X."/>
            <person name="Kaul S."/>
            <person name="Rounsley S.D."/>
            <person name="Shea T.P."/>
            <person name="Benito M.-I."/>
            <person name="Town C.D."/>
            <person name="Fujii C.Y."/>
            <person name="Mason T.M."/>
            <person name="Bowman C.L."/>
            <person name="Barnstead M.E."/>
            <person name="Feldblyum T.V."/>
            <person name="Buell C.R."/>
            <person name="Ketchum K.A."/>
            <person name="Lee J.J."/>
            <person name="Ronning C.M."/>
            <person name="Koo H.L."/>
            <person name="Moffat K.S."/>
            <person name="Cronin L.A."/>
            <person name="Shen M."/>
            <person name="Pai G."/>
            <person name="Van Aken S."/>
            <person name="Umayam L."/>
            <person name="Tallon L.J."/>
            <person name="Gill J.E."/>
            <person name="Adams M.D."/>
            <person name="Carrera A.J."/>
            <person name="Creasy T.H."/>
            <person name="Goodman H.M."/>
            <person name="Somerville C.R."/>
            <person name="Copenhaver G.P."/>
            <person name="Preuss D."/>
            <person name="Nierman W.C."/>
            <person name="White O."/>
            <person name="Eisen J.A."/>
            <person name="Salzberg S.L."/>
            <person name="Fraser C.M."/>
            <person name="Venter J.C."/>
        </authorList>
    </citation>
    <scope>NUCLEOTIDE SEQUENCE [LARGE SCALE GENOMIC DNA]</scope>
    <source>
        <strain>cv. Columbia</strain>
    </source>
</reference>
<reference key="3">
    <citation type="journal article" date="2017" name="Plant J.">
        <title>Araport11: a complete reannotation of the Arabidopsis thaliana reference genome.</title>
        <authorList>
            <person name="Cheng C.Y."/>
            <person name="Krishnakumar V."/>
            <person name="Chan A.P."/>
            <person name="Thibaud-Nissen F."/>
            <person name="Schobel S."/>
            <person name="Town C.D."/>
        </authorList>
    </citation>
    <scope>GENOME REANNOTATION</scope>
    <source>
        <strain>cv. Columbia</strain>
    </source>
</reference>
<reference key="4">
    <citation type="journal article" date="2004" name="Genome Res.">
        <title>Whole genome sequence comparisons and 'full-length' cDNA sequences: a combined approach to evaluate and improve Arabidopsis genome annotation.</title>
        <authorList>
            <person name="Castelli V."/>
            <person name="Aury J.-M."/>
            <person name="Jaillon O."/>
            <person name="Wincker P."/>
            <person name="Clepet C."/>
            <person name="Menard M."/>
            <person name="Cruaud C."/>
            <person name="Quetier F."/>
            <person name="Scarpelli C."/>
            <person name="Schaechter V."/>
            <person name="Temple G."/>
            <person name="Caboche M."/>
            <person name="Weissenbach J."/>
            <person name="Salanoubat M."/>
        </authorList>
    </citation>
    <scope>NUCLEOTIDE SEQUENCE [LARGE SCALE MRNA]</scope>
    <source>
        <strain>cv. Columbia</strain>
    </source>
</reference>
<reference key="5">
    <citation type="journal article" date="2009" name="DNA Res.">
        <title>Analysis of multiple occurrences of alternative splicing events in Arabidopsis thaliana using novel sequenced full-length cDNAs.</title>
        <authorList>
            <person name="Iida K."/>
            <person name="Fukami-Kobayashi K."/>
            <person name="Toyoda A."/>
            <person name="Sakaki Y."/>
            <person name="Kobayashi M."/>
            <person name="Seki M."/>
            <person name="Shinozaki K."/>
        </authorList>
    </citation>
    <scope>NUCLEOTIDE SEQUENCE [LARGE SCALE MRNA]</scope>
    <source>
        <strain>cv. Columbia</strain>
    </source>
</reference>
<reference key="6">
    <citation type="journal article" date="2005" name="Plant Physiol.">
        <title>Genome organization of more than 300 defensin-like genes in Arabidopsis.</title>
        <authorList>
            <person name="Silverstein K.A.T."/>
            <person name="Graham M.A."/>
            <person name="Paape T.D."/>
            <person name="VandenBosch K.A."/>
        </authorList>
    </citation>
    <scope>GENE FAMILY</scope>
</reference>
<comment type="subcellular location">
    <subcellularLocation>
        <location evidence="1">Secreted</location>
    </subcellularLocation>
</comment>
<comment type="similarity">
    <text evidence="3">Belongs to the DEFL family. Protease inhibitor I18 (RTI/MTI-2) subfamily.</text>
</comment>
<comment type="caution">
    <text evidence="4">Was initially thought to be a protease inhibitor.</text>
</comment>
<comment type="sequence caution" evidence="3">
    <conflict type="erroneous initiation">
        <sequence resource="EMBL-CDS" id="AAB64336"/>
    </conflict>
    <text>Extended N-terminus.</text>
</comment>
<comment type="sequence caution" evidence="3">
    <conflict type="erroneous initiation">
        <sequence resource="EMBL-CDS" id="BAH19844"/>
    </conflict>
    <text>Extended N-terminus.</text>
</comment>
<comment type="sequence caution" evidence="3">
    <conflict type="erroneous initiation">
        <sequence resource="EMBL-CDS" id="CAG15162"/>
    </conflict>
    <text>Extended N-terminus.</text>
</comment>